<proteinExistence type="evidence at protein level"/>
<keyword id="KW-0249">Electron transport</keyword>
<keyword id="KW-0472">Membrane</keyword>
<keyword id="KW-0496">Mitochondrion</keyword>
<keyword id="KW-0999">Mitochondrion inner membrane</keyword>
<keyword id="KW-0679">Respiratory chain</keyword>
<keyword id="KW-0809">Transit peptide</keyword>
<keyword id="KW-0813">Transport</keyword>
<reference evidence="7" key="1">
    <citation type="journal article" date="2014" name="PLoS Genet.">
        <title>Analysis of the genome and transcriptome of Cryptococcus neoformans var. grubii reveals complex RNA expression and microevolution leading to virulence attenuation.</title>
        <authorList>
            <person name="Janbon G."/>
            <person name="Ormerod K.L."/>
            <person name="Paulet D."/>
            <person name="Byrnes E.J. III"/>
            <person name="Yadav V."/>
            <person name="Chatterjee G."/>
            <person name="Mullapudi N."/>
            <person name="Hon C.-C."/>
            <person name="Billmyre R.B."/>
            <person name="Brunel F."/>
            <person name="Bahn Y.-S."/>
            <person name="Chen W."/>
            <person name="Chen Y."/>
            <person name="Chow E.W.L."/>
            <person name="Coppee J.-Y."/>
            <person name="Floyd-Averette A."/>
            <person name="Gaillardin C."/>
            <person name="Gerik K.J."/>
            <person name="Goldberg J."/>
            <person name="Gonzalez-Hilarion S."/>
            <person name="Gujja S."/>
            <person name="Hamlin J.L."/>
            <person name="Hsueh Y.-P."/>
            <person name="Ianiri G."/>
            <person name="Jones S."/>
            <person name="Kodira C.D."/>
            <person name="Kozubowski L."/>
            <person name="Lam W."/>
            <person name="Marra M."/>
            <person name="Mesner L.D."/>
            <person name="Mieczkowski P.A."/>
            <person name="Moyrand F."/>
            <person name="Nielsen K."/>
            <person name="Proux C."/>
            <person name="Rossignol T."/>
            <person name="Schein J.E."/>
            <person name="Sun S."/>
            <person name="Wollschlaeger C."/>
            <person name="Wood I.A."/>
            <person name="Zeng Q."/>
            <person name="Neuveglise C."/>
            <person name="Newlon C.S."/>
            <person name="Perfect J.R."/>
            <person name="Lodge J.K."/>
            <person name="Idnurm A."/>
            <person name="Stajich J.E."/>
            <person name="Kronstad J.W."/>
            <person name="Sanyal K."/>
            <person name="Heitman J."/>
            <person name="Fraser J.A."/>
            <person name="Cuomo C.A."/>
            <person name="Dietrich F.S."/>
        </authorList>
    </citation>
    <scope>NUCLEOTIDE SEQUENCE [LARGE SCALE GENOMIC DNA]</scope>
    <source>
        <strain>H99 / ATCC 208821 / CBS 10515 / FGSC 9487</strain>
    </source>
</reference>
<reference evidence="5" key="2">
    <citation type="journal article" date="2020" name="MBio">
        <title>The Novel J-Domain Protein Mrj1 Is Required for Mitochondrial Respiration and Virulence in Cryptococcus neoformans.</title>
        <authorList>
            <person name="Horianopoulos L.C."/>
            <person name="Hu G."/>
            <person name="Caza M."/>
            <person name="Schmitt K."/>
            <person name="Overby P."/>
            <person name="Johnson J.D."/>
            <person name="Valerius O."/>
            <person name="Braus G.H."/>
            <person name="Kronstad J.W."/>
        </authorList>
    </citation>
    <scope>INTERACTION WITH MRJ1</scope>
    <scope>IDENTIFICATION BY MASS SPECTROMETRY</scope>
</reference>
<sequence length="434" mass="44542">MYSLNRLPRSAAFKSSANLLRRNASTTSAGGVNVVGFENKGPAATSSLTVAIKAGSRYETTPGVAHVLKSFAYKATASASALRTAREAELYGGVLSAALTREHLLLSAEFLRGDEEHFLNVLASVLSSSQFYRHELSELVLPVVEAETISSQAIPSTIALDLAHSLAFRRGLGNSLYANKNYPVSIDDVKSFGEAAFAKSNIAVIGTGVSTEALAKAVSNAFGAGTSSGSKLSTPKANYYGGETRVPLDIHAPATATPTMVIAFGTSSPASADLKVLKHLLGGETSVKWTPGASPLAQAADKIPGASAKAFLLPYSDAALFGVVLSAPTSAETKTLAQEVASIVKNAGEFKEEEVKRAVAKATFEDAASTETLSGFVAAAGPAALVGSVPEAQSFSGVSASSISKAAGELLKGKPTVVSIGNISVLPYADELGL</sequence>
<organism evidence="7">
    <name type="scientific">Cryptococcus neoformans var. grubii serotype A (strain H99 / ATCC 208821 / CBS 10515 / FGSC 9487)</name>
    <name type="common">Filobasidiella neoformans var. grubii</name>
    <dbReference type="NCBI Taxonomy" id="235443"/>
    <lineage>
        <taxon>Eukaryota</taxon>
        <taxon>Fungi</taxon>
        <taxon>Dikarya</taxon>
        <taxon>Basidiomycota</taxon>
        <taxon>Agaricomycotina</taxon>
        <taxon>Tremellomycetes</taxon>
        <taxon>Tremellales</taxon>
        <taxon>Cryptococcaceae</taxon>
        <taxon>Cryptococcus</taxon>
        <taxon>Cryptococcus neoformans species complex</taxon>
    </lineage>
</organism>
<dbReference type="EMBL" id="CP003823">
    <property type="protein sequence ID" value="AFR94444.1"/>
    <property type="molecule type" value="Genomic_DNA"/>
</dbReference>
<dbReference type="RefSeq" id="XP_012048763.1">
    <property type="nucleotide sequence ID" value="XM_012193373.1"/>
</dbReference>
<dbReference type="SMR" id="J9VPD8"/>
<dbReference type="GeneID" id="23888519"/>
<dbReference type="KEGG" id="cng:CNAG_05179"/>
<dbReference type="VEuPathDB" id="FungiDB:CNAG_05179"/>
<dbReference type="HOGENOM" id="CLU_009902_0_1_1"/>
<dbReference type="OrthoDB" id="7461at5206"/>
<dbReference type="Proteomes" id="UP000010091">
    <property type="component" value="Chromosome 4"/>
</dbReference>
<dbReference type="GO" id="GO:0005743">
    <property type="term" value="C:mitochondrial inner membrane"/>
    <property type="evidence" value="ECO:0007669"/>
    <property type="project" value="UniProtKB-SubCell"/>
</dbReference>
<dbReference type="GO" id="GO:0045275">
    <property type="term" value="C:respiratory chain complex III"/>
    <property type="evidence" value="ECO:0000304"/>
    <property type="project" value="UniProtKB"/>
</dbReference>
<dbReference type="GO" id="GO:0046872">
    <property type="term" value="F:metal ion binding"/>
    <property type="evidence" value="ECO:0007669"/>
    <property type="project" value="InterPro"/>
</dbReference>
<dbReference type="GO" id="GO:0008121">
    <property type="term" value="F:ubiquinol-cytochrome-c reductase activity"/>
    <property type="evidence" value="ECO:0000304"/>
    <property type="project" value="UniProtKB"/>
</dbReference>
<dbReference type="GO" id="GO:0006122">
    <property type="term" value="P:mitochondrial electron transport, ubiquinol to cytochrome c"/>
    <property type="evidence" value="ECO:0000353"/>
    <property type="project" value="UniProtKB"/>
</dbReference>
<dbReference type="FunFam" id="3.30.830.10:FF:000021">
    <property type="entry name" value="Cytochrome b-c1 complex subunit 2"/>
    <property type="match status" value="1"/>
</dbReference>
<dbReference type="FunFam" id="3.30.830.10:FF:000039">
    <property type="entry name" value="Ubiquinol-cytochrome c reductase core subunit 2"/>
    <property type="match status" value="1"/>
</dbReference>
<dbReference type="Gene3D" id="3.30.830.10">
    <property type="entry name" value="Metalloenzyme, LuxS/M16 peptidase-like"/>
    <property type="match status" value="2"/>
</dbReference>
<dbReference type="InterPro" id="IPR011249">
    <property type="entry name" value="Metalloenz_LuxS/M16"/>
</dbReference>
<dbReference type="InterPro" id="IPR050361">
    <property type="entry name" value="MPP/UQCRC_Complex"/>
</dbReference>
<dbReference type="InterPro" id="IPR011765">
    <property type="entry name" value="Pept_M16_N"/>
</dbReference>
<dbReference type="InterPro" id="IPR007863">
    <property type="entry name" value="Peptidase_M16_C"/>
</dbReference>
<dbReference type="PANTHER" id="PTHR11851:SF209">
    <property type="entry name" value="CYTOCHROME B-C1 COMPLEX SUBUNIT 2, MITOCHONDRIAL"/>
    <property type="match status" value="1"/>
</dbReference>
<dbReference type="PANTHER" id="PTHR11851">
    <property type="entry name" value="METALLOPROTEASE"/>
    <property type="match status" value="1"/>
</dbReference>
<dbReference type="Pfam" id="PF00675">
    <property type="entry name" value="Peptidase_M16"/>
    <property type="match status" value="1"/>
</dbReference>
<dbReference type="Pfam" id="PF05193">
    <property type="entry name" value="Peptidase_M16_C"/>
    <property type="match status" value="1"/>
</dbReference>
<dbReference type="SUPFAM" id="SSF63411">
    <property type="entry name" value="LuxS/MPP-like metallohydrolase"/>
    <property type="match status" value="2"/>
</dbReference>
<evidence type="ECO:0000250" key="1">
    <source>
        <dbReference type="UniProtKB" id="P07257"/>
    </source>
</evidence>
<evidence type="ECO:0000255" key="2"/>
<evidence type="ECO:0000269" key="3">
    <source>
    </source>
</evidence>
<evidence type="ECO:0000303" key="4">
    <source>
    </source>
</evidence>
<evidence type="ECO:0000305" key="5"/>
<evidence type="ECO:0000312" key="6">
    <source>
        <dbReference type="EMBL" id="AFR94444.1"/>
    </source>
</evidence>
<evidence type="ECO:0000312" key="7">
    <source>
        <dbReference type="Proteomes" id="UP000010091"/>
    </source>
</evidence>
<protein>
    <recommendedName>
        <fullName evidence="4">Cytochrome b-c1 complex subunit 2, mitochondrial</fullName>
    </recommendedName>
</protein>
<feature type="transit peptide" description="Mitochondrion" evidence="2">
    <location>
        <begin position="1"/>
        <end position="31"/>
    </location>
</feature>
<feature type="chain" id="PRO_0000451744" description="Cytochrome b-c1 complex subunit 2, mitochondrial" evidence="2">
    <location>
        <begin position="32"/>
        <end position="434"/>
    </location>
</feature>
<comment type="function">
    <text evidence="1">Component of the ubiquinol-cytochrome c oxidoreductase, a multisubunit transmembrane complex that is part of the mitochondrial electron transport chain which drives oxidative phosphorylation. The respiratory chain contains 3 multisubunit complexes succinate dehydrogenase (complex II, CII), ubiquinol-cytochrome c oxidoreductase (cytochrome b-c1 complex, complex III, CIII) and cytochrome c oxidase (complex IV, CIV), that cooperate to transfer electrons derived from NADH and succinate to molecular oxygen, creating an electrochemical gradient over the inner membrane that drives transmembrane transport and the ATP synthase. The cytochrome b-c1 complex catalyzes electron transfer from ubiquinol to cytochrome c, linking this redox reaction to translocation of protons across the mitochondrial inner membrane, with protons being carried across the membrane as hydrogens on the quinol. In the process called Q cycle, 2 protons are consumed from the matrix, 4 protons are released into the intermembrane space and 2 electrons are passed to cytochrome c.</text>
</comment>
<comment type="subunit">
    <text evidence="1 3">Component of the ubiquinol-cytochrome c oxidoreductase (cytochrome b-c1 complex, complex III, CIII), a multisubunit enzyme composed of 10 subunits. The complex is composed of 3 respiratory subunits cytochrome b (COB), cytochrome c1 (CYT1) and Rieske protein (RIP1), 2 core protein subunits COR1 and QCR2, and 5 low-molecular weight protein subunits QCR6, QCR7, QCR8, QCR9 and QCR10 (By similarity). The complex exists as an obligatory dimer and forms supercomplexes (SCs) in the inner mitochondrial membrane with a monomer or a dimer of cytochrome c oxidase (complex IV, CIV), resulting in 2 different assemblies (supercomplexes III(2)IV and III(2)IV(2)) (By similarity). Interacts with MRJ1 (PubMed:32518190).</text>
</comment>
<comment type="subcellular location">
    <subcellularLocation>
        <location evidence="1">Mitochondrion inner membrane</location>
        <topology evidence="1">Peripheral membrane protein</topology>
        <orientation evidence="1">Matrix side</orientation>
    </subcellularLocation>
</comment>
<comment type="similarity">
    <text evidence="5">Belongs to the peptidase M16 family. UQCRC2/QCR2 subfamily.</text>
</comment>
<comment type="caution">
    <text evidence="5">Does not seem to have protease activity as it lacks the zinc-binding sites.</text>
</comment>
<name>QCR2_CRYNH</name>
<accession>J9VPD8</accession>
<gene>
    <name evidence="4" type="primary">QCR2</name>
    <name evidence="6" type="ORF">CNAG_05179</name>
</gene>